<feature type="chain" id="PRO_0000282200" description="UPF0060 membrane protein Ajs_2087">
    <location>
        <begin position="1"/>
        <end position="110"/>
    </location>
</feature>
<feature type="transmembrane region" description="Helical" evidence="1">
    <location>
        <begin position="7"/>
        <end position="27"/>
    </location>
</feature>
<feature type="transmembrane region" description="Helical" evidence="1">
    <location>
        <begin position="33"/>
        <end position="53"/>
    </location>
</feature>
<feature type="transmembrane region" description="Helical" evidence="1">
    <location>
        <begin position="63"/>
        <end position="83"/>
    </location>
</feature>
<feature type="transmembrane region" description="Helical" evidence="1">
    <location>
        <begin position="86"/>
        <end position="106"/>
    </location>
</feature>
<organism>
    <name type="scientific">Acidovorax sp. (strain JS42)</name>
    <dbReference type="NCBI Taxonomy" id="232721"/>
    <lineage>
        <taxon>Bacteria</taxon>
        <taxon>Pseudomonadati</taxon>
        <taxon>Pseudomonadota</taxon>
        <taxon>Betaproteobacteria</taxon>
        <taxon>Burkholderiales</taxon>
        <taxon>Comamonadaceae</taxon>
        <taxon>Acidovorax</taxon>
    </lineage>
</organism>
<reference key="1">
    <citation type="submission" date="2006-12" db="EMBL/GenBank/DDBJ databases">
        <title>Complete sequence of chromosome 1 of Acidovorax sp. JS42.</title>
        <authorList>
            <person name="Copeland A."/>
            <person name="Lucas S."/>
            <person name="Lapidus A."/>
            <person name="Barry K."/>
            <person name="Detter J.C."/>
            <person name="Glavina del Rio T."/>
            <person name="Dalin E."/>
            <person name="Tice H."/>
            <person name="Pitluck S."/>
            <person name="Chertkov O."/>
            <person name="Brettin T."/>
            <person name="Bruce D."/>
            <person name="Han C."/>
            <person name="Tapia R."/>
            <person name="Gilna P."/>
            <person name="Schmutz J."/>
            <person name="Larimer F."/>
            <person name="Land M."/>
            <person name="Hauser L."/>
            <person name="Kyrpides N."/>
            <person name="Kim E."/>
            <person name="Stahl D."/>
            <person name="Richardson P."/>
        </authorList>
    </citation>
    <scope>NUCLEOTIDE SEQUENCE [LARGE SCALE GENOMIC DNA]</scope>
    <source>
        <strain>JS42</strain>
    </source>
</reference>
<sequence length="110" mass="11869">MLPFKTLALFLLTAVAEIVGCYLPWLWLRQGRSAWLLVPAAASLALFAWLLTLHPAATGRVYAAYGGVYVAVALVWLWTVDGVRPGPWDWLGVAVTLCGMAIIAFAPRGG</sequence>
<name>Y2087_ACISJ</name>
<evidence type="ECO:0000255" key="1">
    <source>
        <dbReference type="HAMAP-Rule" id="MF_00010"/>
    </source>
</evidence>
<accession>A1W7N8</accession>
<keyword id="KW-0997">Cell inner membrane</keyword>
<keyword id="KW-1003">Cell membrane</keyword>
<keyword id="KW-0472">Membrane</keyword>
<keyword id="KW-0812">Transmembrane</keyword>
<keyword id="KW-1133">Transmembrane helix</keyword>
<dbReference type="EMBL" id="CP000539">
    <property type="protein sequence ID" value="ABM42263.1"/>
    <property type="molecule type" value="Genomic_DNA"/>
</dbReference>
<dbReference type="SMR" id="A1W7N8"/>
<dbReference type="STRING" id="232721.Ajs_2087"/>
<dbReference type="KEGG" id="ajs:Ajs_2087"/>
<dbReference type="eggNOG" id="COG1742">
    <property type="taxonomic scope" value="Bacteria"/>
</dbReference>
<dbReference type="HOGENOM" id="CLU_117653_2_0_4"/>
<dbReference type="Proteomes" id="UP000000645">
    <property type="component" value="Chromosome"/>
</dbReference>
<dbReference type="GO" id="GO:0005886">
    <property type="term" value="C:plasma membrane"/>
    <property type="evidence" value="ECO:0007669"/>
    <property type="project" value="UniProtKB-SubCell"/>
</dbReference>
<dbReference type="HAMAP" id="MF_00010">
    <property type="entry name" value="UPF0060"/>
    <property type="match status" value="1"/>
</dbReference>
<dbReference type="InterPro" id="IPR003844">
    <property type="entry name" value="UPF0060"/>
</dbReference>
<dbReference type="NCBIfam" id="NF002586">
    <property type="entry name" value="PRK02237.1"/>
    <property type="match status" value="1"/>
</dbReference>
<dbReference type="PANTHER" id="PTHR36116">
    <property type="entry name" value="UPF0060 MEMBRANE PROTEIN YNFA"/>
    <property type="match status" value="1"/>
</dbReference>
<dbReference type="PANTHER" id="PTHR36116:SF1">
    <property type="entry name" value="UPF0060 MEMBRANE PROTEIN YNFA"/>
    <property type="match status" value="1"/>
</dbReference>
<dbReference type="Pfam" id="PF02694">
    <property type="entry name" value="UPF0060"/>
    <property type="match status" value="1"/>
</dbReference>
<dbReference type="SUPFAM" id="SSF103481">
    <property type="entry name" value="Multidrug resistance efflux transporter EmrE"/>
    <property type="match status" value="1"/>
</dbReference>
<protein>
    <recommendedName>
        <fullName evidence="1">UPF0060 membrane protein Ajs_2087</fullName>
    </recommendedName>
</protein>
<proteinExistence type="inferred from homology"/>
<gene>
    <name type="ordered locus">Ajs_2087</name>
</gene>
<comment type="subcellular location">
    <subcellularLocation>
        <location evidence="1">Cell inner membrane</location>
        <topology evidence="1">Multi-pass membrane protein</topology>
    </subcellularLocation>
</comment>
<comment type="similarity">
    <text evidence="1">Belongs to the UPF0060 family.</text>
</comment>